<dbReference type="EC" id="6.3.2.6"/>
<dbReference type="EMBL" id="AE005176">
    <property type="protein sequence ID" value="AAK05631.1"/>
    <property type="molecule type" value="Genomic_DNA"/>
</dbReference>
<dbReference type="EMBL" id="AF054888">
    <property type="protein sequence ID" value="AAC32329.1"/>
    <property type="molecule type" value="Genomic_DNA"/>
</dbReference>
<dbReference type="PIR" id="E86816">
    <property type="entry name" value="E86816"/>
</dbReference>
<dbReference type="RefSeq" id="NP_267689.1">
    <property type="nucleotide sequence ID" value="NC_002662.1"/>
</dbReference>
<dbReference type="RefSeq" id="WP_010906022.1">
    <property type="nucleotide sequence ID" value="NC_002662.1"/>
</dbReference>
<dbReference type="SMR" id="O68830"/>
<dbReference type="PaxDb" id="272623-L177350"/>
<dbReference type="EnsemblBacteria" id="AAK05631">
    <property type="protein sequence ID" value="AAK05631"/>
    <property type="gene ID" value="L177350"/>
</dbReference>
<dbReference type="GeneID" id="89633735"/>
<dbReference type="KEGG" id="lla:L177350"/>
<dbReference type="PATRIC" id="fig|272623.7.peg.1644"/>
<dbReference type="eggNOG" id="COG0152">
    <property type="taxonomic scope" value="Bacteria"/>
</dbReference>
<dbReference type="HOGENOM" id="CLU_061495_2_0_9"/>
<dbReference type="OrthoDB" id="9801549at2"/>
<dbReference type="UniPathway" id="UPA00074">
    <property type="reaction ID" value="UER00131"/>
</dbReference>
<dbReference type="Proteomes" id="UP000002196">
    <property type="component" value="Chromosome"/>
</dbReference>
<dbReference type="GO" id="GO:0005524">
    <property type="term" value="F:ATP binding"/>
    <property type="evidence" value="ECO:0007669"/>
    <property type="project" value="UniProtKB-KW"/>
</dbReference>
<dbReference type="GO" id="GO:0004639">
    <property type="term" value="F:phosphoribosylaminoimidazolesuccinocarboxamide synthase activity"/>
    <property type="evidence" value="ECO:0007669"/>
    <property type="project" value="UniProtKB-UniRule"/>
</dbReference>
<dbReference type="GO" id="GO:0006189">
    <property type="term" value="P:'de novo' IMP biosynthetic process"/>
    <property type="evidence" value="ECO:0007669"/>
    <property type="project" value="UniProtKB-UniRule"/>
</dbReference>
<dbReference type="GO" id="GO:0009236">
    <property type="term" value="P:cobalamin biosynthetic process"/>
    <property type="evidence" value="ECO:0007669"/>
    <property type="project" value="InterPro"/>
</dbReference>
<dbReference type="CDD" id="cd01415">
    <property type="entry name" value="SAICAR_synt_PurC"/>
    <property type="match status" value="1"/>
</dbReference>
<dbReference type="FunFam" id="3.30.200.20:FF:000189">
    <property type="entry name" value="Phosphoribosylaminoimidazole-succinocarboxamide synthase"/>
    <property type="match status" value="1"/>
</dbReference>
<dbReference type="FunFam" id="3.30.470.20:FF:000006">
    <property type="entry name" value="Phosphoribosylaminoimidazole-succinocarboxamide synthase"/>
    <property type="match status" value="1"/>
</dbReference>
<dbReference type="Gene3D" id="3.30.470.20">
    <property type="entry name" value="ATP-grasp fold, B domain"/>
    <property type="match status" value="1"/>
</dbReference>
<dbReference type="Gene3D" id="3.30.200.20">
    <property type="entry name" value="Phosphorylase Kinase, domain 1"/>
    <property type="match status" value="1"/>
</dbReference>
<dbReference type="HAMAP" id="MF_00137">
    <property type="entry name" value="SAICAR_synth"/>
    <property type="match status" value="1"/>
</dbReference>
<dbReference type="InterPro" id="IPR028923">
    <property type="entry name" value="SAICAR_synt/ADE2_N"/>
</dbReference>
<dbReference type="InterPro" id="IPR033934">
    <property type="entry name" value="SAICAR_synt_PurC"/>
</dbReference>
<dbReference type="InterPro" id="IPR001636">
    <property type="entry name" value="SAICAR_synth"/>
</dbReference>
<dbReference type="InterPro" id="IPR050089">
    <property type="entry name" value="SAICAR_synthetase"/>
</dbReference>
<dbReference type="InterPro" id="IPR018236">
    <property type="entry name" value="SAICAR_synthetase_CS"/>
</dbReference>
<dbReference type="NCBIfam" id="TIGR00081">
    <property type="entry name" value="purC"/>
    <property type="match status" value="1"/>
</dbReference>
<dbReference type="PANTHER" id="PTHR43599">
    <property type="entry name" value="MULTIFUNCTIONAL PROTEIN ADE2"/>
    <property type="match status" value="1"/>
</dbReference>
<dbReference type="PANTHER" id="PTHR43599:SF3">
    <property type="entry name" value="SI:DKEY-6E2.2"/>
    <property type="match status" value="1"/>
</dbReference>
<dbReference type="Pfam" id="PF01259">
    <property type="entry name" value="SAICAR_synt"/>
    <property type="match status" value="1"/>
</dbReference>
<dbReference type="SUPFAM" id="SSF56104">
    <property type="entry name" value="SAICAR synthase-like"/>
    <property type="match status" value="1"/>
</dbReference>
<dbReference type="PROSITE" id="PS01057">
    <property type="entry name" value="SAICAR_SYNTHETASE_1"/>
    <property type="match status" value="1"/>
</dbReference>
<dbReference type="PROSITE" id="PS01058">
    <property type="entry name" value="SAICAR_SYNTHETASE_2"/>
    <property type="match status" value="1"/>
</dbReference>
<comment type="catalytic activity">
    <reaction>
        <text>5-amino-1-(5-phospho-D-ribosyl)imidazole-4-carboxylate + L-aspartate + ATP = (2S)-2-[5-amino-1-(5-phospho-beta-D-ribosyl)imidazole-4-carboxamido]succinate + ADP + phosphate + 2 H(+)</text>
        <dbReference type="Rhea" id="RHEA:22628"/>
        <dbReference type="ChEBI" id="CHEBI:15378"/>
        <dbReference type="ChEBI" id="CHEBI:29991"/>
        <dbReference type="ChEBI" id="CHEBI:30616"/>
        <dbReference type="ChEBI" id="CHEBI:43474"/>
        <dbReference type="ChEBI" id="CHEBI:58443"/>
        <dbReference type="ChEBI" id="CHEBI:77657"/>
        <dbReference type="ChEBI" id="CHEBI:456216"/>
        <dbReference type="EC" id="6.3.2.6"/>
    </reaction>
</comment>
<comment type="pathway">
    <text>Purine metabolism; IMP biosynthesis via de novo pathway; 5-amino-1-(5-phospho-D-ribosyl)imidazole-4-carboxamide from 5-amino-1-(5-phospho-D-ribosyl)imidazole-4-carboxylate: step 1/2.</text>
</comment>
<comment type="similarity">
    <text evidence="1">Belongs to the SAICAR synthetase family.</text>
</comment>
<sequence>MEKEKLLYEGKAKKLYFTDDSEVLWVEYCDQATALNGARKEQITGKGALNNQITSLIFEKLNAEGLETHFIEKLSKTEQLNRKVSIIPLEVVLRNVVAGSFAKRFGLEEGIVLQEPIVEFYYKDDALDDPFINDEHVRFLNIATYSEIEFLKSETRKINEILKKIWAEIGLTLVDFKLEFGRLADGRIILADEISPDTSRLWDANGQHMDKDVFRRNIGDLVETYTEVLNLLENAK</sequence>
<gene>
    <name type="primary">purC</name>
    <name type="ordered locus">LL1533</name>
    <name type="ORF">L177350</name>
</gene>
<organism>
    <name type="scientific">Lactococcus lactis subsp. lactis (strain IL1403)</name>
    <name type="common">Streptococcus lactis</name>
    <dbReference type="NCBI Taxonomy" id="272623"/>
    <lineage>
        <taxon>Bacteria</taxon>
        <taxon>Bacillati</taxon>
        <taxon>Bacillota</taxon>
        <taxon>Bacilli</taxon>
        <taxon>Lactobacillales</taxon>
        <taxon>Streptococcaceae</taxon>
        <taxon>Lactococcus</taxon>
    </lineage>
</organism>
<keyword id="KW-0067">ATP-binding</keyword>
<keyword id="KW-0436">Ligase</keyword>
<keyword id="KW-0547">Nucleotide-binding</keyword>
<keyword id="KW-0658">Purine biosynthesis</keyword>
<keyword id="KW-1185">Reference proteome</keyword>
<protein>
    <recommendedName>
        <fullName>Phosphoribosylaminoimidazole-succinocarboxamide synthase</fullName>
        <ecNumber>6.3.2.6</ecNumber>
    </recommendedName>
    <alternativeName>
        <fullName>SAICAR synthetase</fullName>
    </alternativeName>
</protein>
<reference key="1">
    <citation type="journal article" date="2001" name="Genome Res.">
        <title>The complete genome sequence of the lactic acid bacterium Lactococcus lactis ssp. lactis IL1403.</title>
        <authorList>
            <person name="Bolotin A."/>
            <person name="Wincker P."/>
            <person name="Mauger S."/>
            <person name="Jaillon O."/>
            <person name="Malarme K."/>
            <person name="Weissenbach J."/>
            <person name="Ehrlich S.D."/>
            <person name="Sorokin A."/>
        </authorList>
    </citation>
    <scope>NUCLEOTIDE SEQUENCE [LARGE SCALE GENOMIC DNA]</scope>
    <source>
        <strain>IL1403</strain>
    </source>
</reference>
<reference key="2">
    <citation type="journal article" date="1998" name="J. Bacteriol.">
        <title>Activation control of pur gene expression in Lactococcus lactis: proposal for a consensus activator binding sequence based on deletion analysis and site-directed mutagenesis of purC and purD promoter regions.</title>
        <authorList>
            <person name="Kilstrup M."/>
            <person name="Jessing S.G."/>
            <person name="Wichmand-Jorgensen S.B."/>
            <person name="Madsen M."/>
            <person name="Nilsson D."/>
        </authorList>
    </citation>
    <scope>NUCLEOTIDE SEQUENCE [GENOMIC DNA] OF 1-115</scope>
    <source>
        <strain>CHCC285</strain>
    </source>
</reference>
<accession>O68830</accession>
<name>PUR7_LACLA</name>
<evidence type="ECO:0000305" key="1"/>
<proteinExistence type="inferred from homology"/>
<feature type="chain" id="PRO_0000100833" description="Phosphoribosylaminoimidazole-succinocarboxamide synthase">
    <location>
        <begin position="1"/>
        <end position="236"/>
    </location>
</feature>